<comment type="function">
    <text evidence="1">Acts as a negative regulator of the proliferation of normal cells by interacting strongly with CDK4 and CDK6. This inhibits their ability to interact with cyclins D and to phosphorylate the retinoblastoma protein (By similarity).</text>
</comment>
<comment type="subunit">
    <text evidence="1">Heterodimer with CDK4 or CDK6. Predominamt P16 complexes contained CDK6. Interacts with CDK4 (both 'T-172'-phosphorylated and non-phosphorylated forms); the interaction inhibits cyclin D-CDK4 kinase activity. Interacts with ISCO2 (By similarity).</text>
</comment>
<comment type="subcellular location">
    <subcellularLocation>
        <location evidence="1">Cytoplasm</location>
    </subcellularLocation>
    <subcellularLocation>
        <location evidence="1">Nucleus</location>
    </subcellularLocation>
</comment>
<comment type="alternative products">
    <event type="alternative splicing"/>
    <event type="alternative initiation"/>
    <isoform>
        <id>O77617-1</id>
        <name>1</name>
        <name>CDKN2A</name>
        <name>p16INK4a</name>
        <sequence type="displayed"/>
    </isoform>
    <isoform>
        <id>O77617-2</id>
        <name>3</name>
        <sequence type="described" ref="VSP_018701"/>
    </isoform>
    <isoform>
        <id>O77618-1</id>
        <name>tumor suppressor ARF</name>
        <name>p19ARF</name>
        <sequence type="external"/>
    </isoform>
    <text>Isoform 1 and isoform tumor suppressor ARF arise due to the use of two alternative first exons joined to a common exon 2 at the same acceptor site but in different reading frames, resulting in two completely different isoforms.</text>
</comment>
<comment type="tissue specificity">
    <text evidence="3">Expressed predominantly in lung and testis. In the testis, restricted to germ cells in the seminiferous epithelium. Not detected in premeiotic spermatogonia but high levels found in postmeiotic spermatids. In primary tumors, low levels detected in melanocytic hyperplasias. Higher levels found in non-metastatic and metastatic melanomas.</text>
</comment>
<comment type="miscellaneous">
    <molecule>Isoform 3</molecule>
    <text evidence="5">Produced by alternative initiation at Met-35 of isoform 1.</text>
</comment>
<comment type="similarity">
    <text evidence="5">Belongs to the CDKN2 cyclin-dependent kinase inhibitor family.</text>
</comment>
<comment type="caution">
    <text evidence="5">The proteins described here are encoded by the gene CDKN2A, but are completely unrelated in terms of sequence and function to tumor suppressor ARF (AC O77618) which is encoded by the same gene.</text>
</comment>
<keyword id="KW-0024">Alternative initiation</keyword>
<keyword id="KW-0025">Alternative splicing</keyword>
<keyword id="KW-0040">ANK repeat</keyword>
<keyword id="KW-0131">Cell cycle</keyword>
<keyword id="KW-0963">Cytoplasm</keyword>
<keyword id="KW-0539">Nucleus</keyword>
<keyword id="KW-1185">Reference proteome</keyword>
<keyword id="KW-0677">Repeat</keyword>
<keyword id="KW-0043">Tumor suppressor</keyword>
<reference key="1">
    <citation type="journal article" date="1998" name="DNA Cell Biol.">
        <title>Cloning and characterization of the CDKN2A and p19ARF genes from Monodelphis domestica.</title>
        <authorList>
            <person name="Sherburn T.E."/>
            <person name="Gale J.M."/>
            <person name="Ley R.D."/>
        </authorList>
    </citation>
    <scope>NUCLEOTIDE SEQUENCE [MRNA]</scope>
    <scope>ALTERNATIVE INITIATION</scope>
</reference>
<reference key="2">
    <citation type="journal article" date="2001" name="Mol. Carcinog.">
        <title>Characterization of the CDKN2A and ARF genes in UV-induced melanocytic hyperplasias and melanomas of an opossum (Monodelphis domestica).</title>
        <authorList>
            <person name="Chan J."/>
            <person name="Robinson E.S."/>
            <person name="Atencio J."/>
            <person name="Wang Z."/>
            <person name="Kazianis S."/>
            <person name="Coletta L.D."/>
            <person name="Nairn R.S."/>
            <person name="McCarrey J.R."/>
        </authorList>
    </citation>
    <scope>NUCLEOTIDE SEQUENCE [MRNA]</scope>
    <scope>TISSUE SPECIFICITY</scope>
    <scope>VARIANT PHE-151</scope>
</reference>
<proteinExistence type="evidence at transcript level"/>
<gene>
    <name evidence="4" type="primary">CDKN2A</name>
</gene>
<feature type="chain" id="PRO_0000004804" description="Cyclin-dependent kinase inhibitor 2A">
    <location>
        <begin position="1"/>
        <end position="171"/>
    </location>
</feature>
<feature type="repeat" description="ANK 1">
    <location>
        <begin position="45"/>
        <end position="74"/>
    </location>
</feature>
<feature type="repeat" description="ANK 2">
    <location>
        <begin position="78"/>
        <end position="106"/>
    </location>
</feature>
<feature type="repeat" description="ANK 3">
    <location>
        <begin position="111"/>
        <end position="140"/>
    </location>
</feature>
<feature type="region of interest" description="Disordered" evidence="2">
    <location>
        <begin position="33"/>
        <end position="52"/>
    </location>
</feature>
<feature type="compositionally biased region" description="Basic and acidic residues" evidence="2">
    <location>
        <begin position="33"/>
        <end position="42"/>
    </location>
</feature>
<feature type="splice variant" id="VSP_018701" description="In isoform 3." evidence="5">
    <location>
        <begin position="1"/>
        <end position="34"/>
    </location>
</feature>
<feature type="sequence variant" description="In some primary melanomas and melanoma cell lines." evidence="3">
    <original>L</original>
    <variation>F</variation>
    <location>
        <position position="151"/>
    </location>
</feature>
<name>CDN2A_MONDO</name>
<sequence>MGIVEKKEGGLERNRALFNSEGSCEGAKCGKEASMHTKHESEESFSGEKLTEAAARGRTEVVTELLELGTNPNAVNRFGRSAIQVMMMGNVRLAAILLQYGAEPNTPDPTTLTLPVHDAAREGFLDTLMLLHRAGARLDVRDSWGRLPVDLAEEQGHHLVVAYLREVVRDA</sequence>
<dbReference type="EMBL" id="AF064808">
    <property type="protein sequence ID" value="AAC23669.1"/>
    <property type="molecule type" value="mRNA"/>
</dbReference>
<dbReference type="EMBL" id="AF064808">
    <property type="protein sequence ID" value="AAC23670.1"/>
    <property type="molecule type" value="mRNA"/>
</dbReference>
<dbReference type="EMBL" id="AF236861">
    <property type="protein sequence ID" value="AAF65222.1"/>
    <property type="molecule type" value="mRNA"/>
</dbReference>
<dbReference type="RefSeq" id="NP_001029248.1">
    <molecule id="O77617-1"/>
    <property type="nucleotide sequence ID" value="NM_001034076.1"/>
</dbReference>
<dbReference type="SMR" id="O77617"/>
<dbReference type="FunCoup" id="O77617">
    <property type="interactions" value="1230"/>
</dbReference>
<dbReference type="Ensembl" id="ENSMODT00000004787.3">
    <molecule id="O77617-1"/>
    <property type="protein sequence ID" value="ENSMODP00000004687.1"/>
    <property type="gene ID" value="ENSMODG00000003820.3"/>
</dbReference>
<dbReference type="GeneID" id="554242"/>
<dbReference type="CTD" id="1029"/>
<dbReference type="eggNOG" id="KOG0504">
    <property type="taxonomic scope" value="Eukaryota"/>
</dbReference>
<dbReference type="GeneTree" id="ENSGT00940000165099"/>
<dbReference type="HOGENOM" id="CLU_000134_37_1_1"/>
<dbReference type="InParanoid" id="O77617"/>
<dbReference type="OMA" id="SALQVMM"/>
<dbReference type="OrthoDB" id="539213at2759"/>
<dbReference type="TreeFam" id="TF352389"/>
<dbReference type="Proteomes" id="UP000002280">
    <property type="component" value="Chromosome 6"/>
</dbReference>
<dbReference type="Bgee" id="ENSMODG00000003820">
    <property type="expression patterns" value="Expressed in testis and 19 other cell types or tissues"/>
</dbReference>
<dbReference type="GO" id="GO:0005737">
    <property type="term" value="C:cytoplasm"/>
    <property type="evidence" value="ECO:0000318"/>
    <property type="project" value="GO_Central"/>
</dbReference>
<dbReference type="GO" id="GO:0005634">
    <property type="term" value="C:nucleus"/>
    <property type="evidence" value="ECO:0000318"/>
    <property type="project" value="GO_Central"/>
</dbReference>
<dbReference type="GO" id="GO:0004861">
    <property type="term" value="F:cyclin-dependent protein serine/threonine kinase inhibitor activity"/>
    <property type="evidence" value="ECO:0000318"/>
    <property type="project" value="GO_Central"/>
</dbReference>
<dbReference type="GO" id="GO:0008285">
    <property type="term" value="P:negative regulation of cell population proliferation"/>
    <property type="evidence" value="ECO:0000318"/>
    <property type="project" value="GO_Central"/>
</dbReference>
<dbReference type="GO" id="GO:2000045">
    <property type="term" value="P:regulation of G1/S transition of mitotic cell cycle"/>
    <property type="evidence" value="ECO:0000318"/>
    <property type="project" value="GO_Central"/>
</dbReference>
<dbReference type="FunFam" id="1.25.40.20:FF:000107">
    <property type="entry name" value="cyclin-dependent kinase 4 inhibitor B"/>
    <property type="match status" value="1"/>
</dbReference>
<dbReference type="Gene3D" id="1.25.40.20">
    <property type="entry name" value="Ankyrin repeat-containing domain"/>
    <property type="match status" value="1"/>
</dbReference>
<dbReference type="InterPro" id="IPR050776">
    <property type="entry name" value="Ank_Repeat/CDKN_Inhibitor"/>
</dbReference>
<dbReference type="InterPro" id="IPR002110">
    <property type="entry name" value="Ankyrin_rpt"/>
</dbReference>
<dbReference type="InterPro" id="IPR036770">
    <property type="entry name" value="Ankyrin_rpt-contain_sf"/>
</dbReference>
<dbReference type="PANTHER" id="PTHR24201">
    <property type="entry name" value="ANK_REP_REGION DOMAIN-CONTAINING PROTEIN"/>
    <property type="match status" value="1"/>
</dbReference>
<dbReference type="PANTHER" id="PTHR24201:SF8">
    <property type="entry name" value="CYCLIN-DEPENDENT KINASE 4 INHIBITOR B"/>
    <property type="match status" value="1"/>
</dbReference>
<dbReference type="Pfam" id="PF12796">
    <property type="entry name" value="Ank_2"/>
    <property type="match status" value="1"/>
</dbReference>
<dbReference type="SUPFAM" id="SSF48403">
    <property type="entry name" value="Ankyrin repeat"/>
    <property type="match status" value="1"/>
</dbReference>
<dbReference type="PROSITE" id="PS50297">
    <property type="entry name" value="ANK_REP_REGION"/>
    <property type="match status" value="1"/>
</dbReference>
<dbReference type="PROSITE" id="PS50088">
    <property type="entry name" value="ANK_REPEAT"/>
    <property type="match status" value="1"/>
</dbReference>
<organism>
    <name type="scientific">Monodelphis domestica</name>
    <name type="common">Gray short-tailed opossum</name>
    <dbReference type="NCBI Taxonomy" id="13616"/>
    <lineage>
        <taxon>Eukaryota</taxon>
        <taxon>Metazoa</taxon>
        <taxon>Chordata</taxon>
        <taxon>Craniata</taxon>
        <taxon>Vertebrata</taxon>
        <taxon>Euteleostomi</taxon>
        <taxon>Mammalia</taxon>
        <taxon>Metatheria</taxon>
        <taxon>Didelphimorphia</taxon>
        <taxon>Didelphidae</taxon>
        <taxon>Monodelphis</taxon>
    </lineage>
</organism>
<protein>
    <recommendedName>
        <fullName evidence="6">Cyclin-dependent kinase inhibitor 2A</fullName>
    </recommendedName>
    <alternativeName>
        <fullName>Cyclin-dependent kinase 4 inhibitor A</fullName>
        <shortName>CDK4I</shortName>
    </alternativeName>
    <alternativeName>
        <fullName>Tumor suppressor CDKN2A</fullName>
    </alternativeName>
    <alternativeName>
        <fullName>p16-INK4a</fullName>
        <shortName>p16-INK4</shortName>
    </alternativeName>
</protein>
<evidence type="ECO:0000250" key="1"/>
<evidence type="ECO:0000256" key="2">
    <source>
        <dbReference type="SAM" id="MobiDB-lite"/>
    </source>
</evidence>
<evidence type="ECO:0000269" key="3">
    <source>
    </source>
</evidence>
<evidence type="ECO:0000303" key="4">
    <source>
    </source>
</evidence>
<evidence type="ECO:0000305" key="5"/>
<evidence type="ECO:0000305" key="6">
    <source>
    </source>
</evidence>
<accession>O77617</accession>
<accession>Q548V3</accession>